<comment type="catalytic activity">
    <reaction evidence="1">
        <text>urea + 2 H2O + H(+) = hydrogencarbonate + 2 NH4(+)</text>
        <dbReference type="Rhea" id="RHEA:20557"/>
        <dbReference type="ChEBI" id="CHEBI:15377"/>
        <dbReference type="ChEBI" id="CHEBI:15378"/>
        <dbReference type="ChEBI" id="CHEBI:16199"/>
        <dbReference type="ChEBI" id="CHEBI:17544"/>
        <dbReference type="ChEBI" id="CHEBI:28938"/>
        <dbReference type="EC" id="3.5.1.5"/>
    </reaction>
</comment>
<comment type="pathway">
    <text evidence="1">Nitrogen metabolism; urea degradation; CO(2) and NH(3) from urea (urease route): step 1/1.</text>
</comment>
<comment type="subunit">
    <text evidence="1">Heterotrimer of UreA (gamma), UreB (beta) and UreC (alpha) subunits. Three heterotrimers associate to form the active enzyme.</text>
</comment>
<comment type="subcellular location">
    <subcellularLocation>
        <location evidence="1">Cytoplasm</location>
    </subcellularLocation>
</comment>
<comment type="similarity">
    <text evidence="1">Belongs to the urease gamma subunit family.</text>
</comment>
<proteinExistence type="inferred from homology"/>
<sequence>MQLTPREVEKLMIYTLSDVAFKRKARGLKLNYPEAVSIITVTAMEGARDGKSVEDVMKEASKVLTKDDVMDGVADLIPNVQVEAIFTDGSRLVTVHDPIK</sequence>
<keyword id="KW-0963">Cytoplasm</keyword>
<keyword id="KW-0378">Hydrolase</keyword>
<organism>
    <name type="scientific">Yersinia pestis (strain Pestoides F)</name>
    <dbReference type="NCBI Taxonomy" id="386656"/>
    <lineage>
        <taxon>Bacteria</taxon>
        <taxon>Pseudomonadati</taxon>
        <taxon>Pseudomonadota</taxon>
        <taxon>Gammaproteobacteria</taxon>
        <taxon>Enterobacterales</taxon>
        <taxon>Yersiniaceae</taxon>
        <taxon>Yersinia</taxon>
    </lineage>
</organism>
<feature type="chain" id="PRO_1000046380" description="Urease subunit gamma">
    <location>
        <begin position="1"/>
        <end position="100"/>
    </location>
</feature>
<name>URE3_YERPP</name>
<dbReference type="EC" id="3.5.1.5" evidence="1"/>
<dbReference type="EMBL" id="CP000668">
    <property type="protein sequence ID" value="ABP39996.1"/>
    <property type="molecule type" value="Genomic_DNA"/>
</dbReference>
<dbReference type="RefSeq" id="WP_002215288.1">
    <property type="nucleotide sequence ID" value="NZ_CP009715.1"/>
</dbReference>
<dbReference type="SMR" id="A4TL34"/>
<dbReference type="KEGG" id="ypp:YPDSF_1611"/>
<dbReference type="PATRIC" id="fig|386656.14.peg.2156"/>
<dbReference type="UniPathway" id="UPA00258">
    <property type="reaction ID" value="UER00370"/>
</dbReference>
<dbReference type="GO" id="GO:0005737">
    <property type="term" value="C:cytoplasm"/>
    <property type="evidence" value="ECO:0007669"/>
    <property type="project" value="UniProtKB-SubCell"/>
</dbReference>
<dbReference type="GO" id="GO:0016151">
    <property type="term" value="F:nickel cation binding"/>
    <property type="evidence" value="ECO:0007669"/>
    <property type="project" value="InterPro"/>
</dbReference>
<dbReference type="GO" id="GO:0009039">
    <property type="term" value="F:urease activity"/>
    <property type="evidence" value="ECO:0007669"/>
    <property type="project" value="UniProtKB-UniRule"/>
</dbReference>
<dbReference type="GO" id="GO:0043419">
    <property type="term" value="P:urea catabolic process"/>
    <property type="evidence" value="ECO:0007669"/>
    <property type="project" value="UniProtKB-UniRule"/>
</dbReference>
<dbReference type="CDD" id="cd00390">
    <property type="entry name" value="Urease_gamma"/>
    <property type="match status" value="1"/>
</dbReference>
<dbReference type="Gene3D" id="3.30.280.10">
    <property type="entry name" value="Urease, gamma-like subunit"/>
    <property type="match status" value="1"/>
</dbReference>
<dbReference type="HAMAP" id="MF_00739">
    <property type="entry name" value="Urease_gamma"/>
    <property type="match status" value="1"/>
</dbReference>
<dbReference type="InterPro" id="IPR012010">
    <property type="entry name" value="Urease_gamma"/>
</dbReference>
<dbReference type="InterPro" id="IPR002026">
    <property type="entry name" value="Urease_gamma/gamma-beta_su"/>
</dbReference>
<dbReference type="InterPro" id="IPR036463">
    <property type="entry name" value="Urease_gamma_sf"/>
</dbReference>
<dbReference type="InterPro" id="IPR050069">
    <property type="entry name" value="Urease_subunit"/>
</dbReference>
<dbReference type="NCBIfam" id="NF009712">
    <property type="entry name" value="PRK13241.1"/>
    <property type="match status" value="1"/>
</dbReference>
<dbReference type="NCBIfam" id="TIGR00193">
    <property type="entry name" value="urease_gam"/>
    <property type="match status" value="1"/>
</dbReference>
<dbReference type="PANTHER" id="PTHR33569">
    <property type="entry name" value="UREASE"/>
    <property type="match status" value="1"/>
</dbReference>
<dbReference type="PANTHER" id="PTHR33569:SF1">
    <property type="entry name" value="UREASE"/>
    <property type="match status" value="1"/>
</dbReference>
<dbReference type="Pfam" id="PF00547">
    <property type="entry name" value="Urease_gamma"/>
    <property type="match status" value="1"/>
</dbReference>
<dbReference type="PIRSF" id="PIRSF001223">
    <property type="entry name" value="Urease_gamma"/>
    <property type="match status" value="1"/>
</dbReference>
<dbReference type="SUPFAM" id="SSF54111">
    <property type="entry name" value="Urease, gamma-subunit"/>
    <property type="match status" value="1"/>
</dbReference>
<gene>
    <name evidence="1" type="primary">ureA</name>
    <name type="ordered locus">YPDSF_1611</name>
</gene>
<evidence type="ECO:0000255" key="1">
    <source>
        <dbReference type="HAMAP-Rule" id="MF_00739"/>
    </source>
</evidence>
<reference key="1">
    <citation type="submission" date="2007-02" db="EMBL/GenBank/DDBJ databases">
        <title>Complete sequence of chromosome of Yersinia pestis Pestoides F.</title>
        <authorList>
            <consortium name="US DOE Joint Genome Institute"/>
            <person name="Copeland A."/>
            <person name="Lucas S."/>
            <person name="Lapidus A."/>
            <person name="Barry K."/>
            <person name="Detter J.C."/>
            <person name="Glavina del Rio T."/>
            <person name="Hammon N."/>
            <person name="Israni S."/>
            <person name="Dalin E."/>
            <person name="Tice H."/>
            <person name="Pitluck S."/>
            <person name="Di Bartolo G."/>
            <person name="Chain P."/>
            <person name="Malfatti S."/>
            <person name="Shin M."/>
            <person name="Vergez L."/>
            <person name="Schmutz J."/>
            <person name="Larimer F."/>
            <person name="Land M."/>
            <person name="Hauser L."/>
            <person name="Worsham P."/>
            <person name="Chu M."/>
            <person name="Bearden S."/>
            <person name="Garcia E."/>
            <person name="Richardson P."/>
        </authorList>
    </citation>
    <scope>NUCLEOTIDE SEQUENCE [LARGE SCALE GENOMIC DNA]</scope>
    <source>
        <strain>Pestoides F</strain>
    </source>
</reference>
<protein>
    <recommendedName>
        <fullName evidence="1">Urease subunit gamma</fullName>
        <ecNumber evidence="1">3.5.1.5</ecNumber>
    </recommendedName>
    <alternativeName>
        <fullName evidence="1">Urea amidohydrolase subunit gamma</fullName>
    </alternativeName>
</protein>
<accession>A4TL34</accession>